<gene>
    <name evidence="1" type="primary">rimP</name>
    <name type="ordered locus">GOX1579</name>
</gene>
<accession>Q5FQM6</accession>
<reference key="1">
    <citation type="journal article" date="2005" name="Nat. Biotechnol.">
        <title>Complete genome sequence of the acetic acid bacterium Gluconobacter oxydans.</title>
        <authorList>
            <person name="Prust C."/>
            <person name="Hoffmeister M."/>
            <person name="Liesegang H."/>
            <person name="Wiezer A."/>
            <person name="Fricke W.F."/>
            <person name="Ehrenreich A."/>
            <person name="Gottschalk G."/>
            <person name="Deppenmeier U."/>
        </authorList>
    </citation>
    <scope>NUCLEOTIDE SEQUENCE [LARGE SCALE GENOMIC DNA]</scope>
    <source>
        <strain>621H</strain>
    </source>
</reference>
<feature type="chain" id="PRO_0000229242" description="Ribosome maturation factor RimP">
    <location>
        <begin position="1"/>
        <end position="203"/>
    </location>
</feature>
<feature type="region of interest" description="Disordered" evidence="2">
    <location>
        <begin position="179"/>
        <end position="203"/>
    </location>
</feature>
<protein>
    <recommendedName>
        <fullName evidence="1">Ribosome maturation factor RimP</fullName>
    </recommendedName>
</protein>
<comment type="function">
    <text evidence="1">Required for maturation of 30S ribosomal subunits.</text>
</comment>
<comment type="subcellular location">
    <subcellularLocation>
        <location evidence="1">Cytoplasm</location>
    </subcellularLocation>
</comment>
<comment type="similarity">
    <text evidence="1">Belongs to the RimP family.</text>
</comment>
<evidence type="ECO:0000255" key="1">
    <source>
        <dbReference type="HAMAP-Rule" id="MF_01077"/>
    </source>
</evidence>
<evidence type="ECO:0000256" key="2">
    <source>
        <dbReference type="SAM" id="MobiDB-lite"/>
    </source>
</evidence>
<name>RIMP_GLUOX</name>
<proteinExistence type="inferred from homology"/>
<organism>
    <name type="scientific">Gluconobacter oxydans (strain 621H)</name>
    <name type="common">Gluconobacter suboxydans</name>
    <dbReference type="NCBI Taxonomy" id="290633"/>
    <lineage>
        <taxon>Bacteria</taxon>
        <taxon>Pseudomonadati</taxon>
        <taxon>Pseudomonadota</taxon>
        <taxon>Alphaproteobacteria</taxon>
        <taxon>Acetobacterales</taxon>
        <taxon>Acetobacteraceae</taxon>
        <taxon>Gluconobacter</taxon>
    </lineage>
</organism>
<keyword id="KW-0963">Cytoplasm</keyword>
<keyword id="KW-1185">Reference proteome</keyword>
<keyword id="KW-0690">Ribosome biogenesis</keyword>
<dbReference type="EMBL" id="CP000009">
    <property type="protein sequence ID" value="AAW61320.1"/>
    <property type="molecule type" value="Genomic_DNA"/>
</dbReference>
<dbReference type="RefSeq" id="WP_011253104.1">
    <property type="nucleotide sequence ID" value="NZ_LT900338.1"/>
</dbReference>
<dbReference type="SMR" id="Q5FQM6"/>
<dbReference type="STRING" id="290633.GOX1579"/>
<dbReference type="GeneID" id="56905921"/>
<dbReference type="KEGG" id="gox:GOX1579"/>
<dbReference type="eggNOG" id="COG0779">
    <property type="taxonomic scope" value="Bacteria"/>
</dbReference>
<dbReference type="HOGENOM" id="CLU_070525_0_1_5"/>
<dbReference type="Proteomes" id="UP000006375">
    <property type="component" value="Chromosome"/>
</dbReference>
<dbReference type="GO" id="GO:0005829">
    <property type="term" value="C:cytosol"/>
    <property type="evidence" value="ECO:0007669"/>
    <property type="project" value="TreeGrafter"/>
</dbReference>
<dbReference type="GO" id="GO:0000028">
    <property type="term" value="P:ribosomal small subunit assembly"/>
    <property type="evidence" value="ECO:0007669"/>
    <property type="project" value="TreeGrafter"/>
</dbReference>
<dbReference type="GO" id="GO:0006412">
    <property type="term" value="P:translation"/>
    <property type="evidence" value="ECO:0007669"/>
    <property type="project" value="TreeGrafter"/>
</dbReference>
<dbReference type="CDD" id="cd01734">
    <property type="entry name" value="YlxS_C"/>
    <property type="match status" value="1"/>
</dbReference>
<dbReference type="Gene3D" id="2.30.30.180">
    <property type="entry name" value="Ribosome maturation factor RimP, C-terminal domain"/>
    <property type="match status" value="1"/>
</dbReference>
<dbReference type="Gene3D" id="3.30.300.70">
    <property type="entry name" value="RimP-like superfamily, N-terminal"/>
    <property type="match status" value="1"/>
</dbReference>
<dbReference type="HAMAP" id="MF_01077">
    <property type="entry name" value="RimP"/>
    <property type="match status" value="1"/>
</dbReference>
<dbReference type="InterPro" id="IPR003728">
    <property type="entry name" value="Ribosome_maturation_RimP"/>
</dbReference>
<dbReference type="InterPro" id="IPR028998">
    <property type="entry name" value="RimP_C"/>
</dbReference>
<dbReference type="InterPro" id="IPR036847">
    <property type="entry name" value="RimP_C_sf"/>
</dbReference>
<dbReference type="InterPro" id="IPR028989">
    <property type="entry name" value="RimP_N"/>
</dbReference>
<dbReference type="InterPro" id="IPR035956">
    <property type="entry name" value="RimP_N_sf"/>
</dbReference>
<dbReference type="NCBIfam" id="NF000932">
    <property type="entry name" value="PRK00092.2-5"/>
    <property type="match status" value="1"/>
</dbReference>
<dbReference type="PANTHER" id="PTHR33867">
    <property type="entry name" value="RIBOSOME MATURATION FACTOR RIMP"/>
    <property type="match status" value="1"/>
</dbReference>
<dbReference type="PANTHER" id="PTHR33867:SF1">
    <property type="entry name" value="RIBOSOME MATURATION FACTOR RIMP"/>
    <property type="match status" value="1"/>
</dbReference>
<dbReference type="Pfam" id="PF17384">
    <property type="entry name" value="DUF150_C"/>
    <property type="match status" value="1"/>
</dbReference>
<dbReference type="Pfam" id="PF02576">
    <property type="entry name" value="RimP_N"/>
    <property type="match status" value="1"/>
</dbReference>
<dbReference type="SUPFAM" id="SSF74942">
    <property type="entry name" value="YhbC-like, C-terminal domain"/>
    <property type="match status" value="1"/>
</dbReference>
<dbReference type="SUPFAM" id="SSF75420">
    <property type="entry name" value="YhbC-like, N-terminal domain"/>
    <property type="match status" value="1"/>
</dbReference>
<sequence>MSQQNASSDIELPHLTGLEARIAERIAPTLADLGYELVRLSVLGRDTPTIQIMADRANGSLISVEDCEQISHAAGAILDVDDPIPGAWMLEVSSAGIDRPLTRAKDWERFAGHLAKAELDVPLNGRRRFSGTVMGARDGNAIIRLDDGTEAVLPLVDIRKARLVLTDALIEASAALAGVSSEGEDGGEARQAPKLNPKKPGKK</sequence>